<gene>
    <name evidence="1" type="primary">gltX2</name>
    <name type="ordered locus">CbuG_1803</name>
</gene>
<organism>
    <name type="scientific">Coxiella burnetii (strain CbuG_Q212)</name>
    <name type="common">Coxiella burnetii (strain Q212)</name>
    <dbReference type="NCBI Taxonomy" id="434923"/>
    <lineage>
        <taxon>Bacteria</taxon>
        <taxon>Pseudomonadati</taxon>
        <taxon>Pseudomonadota</taxon>
        <taxon>Gammaproteobacteria</taxon>
        <taxon>Legionellales</taxon>
        <taxon>Coxiellaceae</taxon>
        <taxon>Coxiella</taxon>
    </lineage>
</organism>
<protein>
    <recommendedName>
        <fullName evidence="1">Glutamate--tRNA ligase 2</fullName>
        <ecNumber evidence="1">6.1.1.17</ecNumber>
    </recommendedName>
    <alternativeName>
        <fullName evidence="1">Glutamyl-tRNA synthetase 2</fullName>
        <shortName evidence="1">GluRS 2</shortName>
    </alternativeName>
</protein>
<accession>B6J2J3</accession>
<dbReference type="EC" id="6.1.1.17" evidence="1"/>
<dbReference type="EMBL" id="CP001019">
    <property type="protein sequence ID" value="ACJ19070.1"/>
    <property type="status" value="ALT_INIT"/>
    <property type="molecule type" value="Genomic_DNA"/>
</dbReference>
<dbReference type="SMR" id="B6J2J3"/>
<dbReference type="KEGG" id="cbg:CbuG_1803"/>
<dbReference type="HOGENOM" id="CLU_015768_6_0_6"/>
<dbReference type="GO" id="GO:0005829">
    <property type="term" value="C:cytosol"/>
    <property type="evidence" value="ECO:0007669"/>
    <property type="project" value="TreeGrafter"/>
</dbReference>
<dbReference type="GO" id="GO:0005524">
    <property type="term" value="F:ATP binding"/>
    <property type="evidence" value="ECO:0007669"/>
    <property type="project" value="UniProtKB-UniRule"/>
</dbReference>
<dbReference type="GO" id="GO:0004818">
    <property type="term" value="F:glutamate-tRNA ligase activity"/>
    <property type="evidence" value="ECO:0007669"/>
    <property type="project" value="UniProtKB-UniRule"/>
</dbReference>
<dbReference type="GO" id="GO:0000049">
    <property type="term" value="F:tRNA binding"/>
    <property type="evidence" value="ECO:0007669"/>
    <property type="project" value="InterPro"/>
</dbReference>
<dbReference type="GO" id="GO:0008270">
    <property type="term" value="F:zinc ion binding"/>
    <property type="evidence" value="ECO:0007669"/>
    <property type="project" value="UniProtKB-UniRule"/>
</dbReference>
<dbReference type="GO" id="GO:0006424">
    <property type="term" value="P:glutamyl-tRNA aminoacylation"/>
    <property type="evidence" value="ECO:0007669"/>
    <property type="project" value="UniProtKB-UniRule"/>
</dbReference>
<dbReference type="CDD" id="cd00808">
    <property type="entry name" value="GluRS_core"/>
    <property type="match status" value="1"/>
</dbReference>
<dbReference type="FunFam" id="3.40.50.620:FF:000007">
    <property type="entry name" value="Glutamate--tRNA ligase"/>
    <property type="match status" value="1"/>
</dbReference>
<dbReference type="Gene3D" id="1.10.10.350">
    <property type="match status" value="1"/>
</dbReference>
<dbReference type="Gene3D" id="3.40.50.620">
    <property type="entry name" value="HUPs"/>
    <property type="match status" value="1"/>
</dbReference>
<dbReference type="HAMAP" id="MF_00022">
    <property type="entry name" value="Glu_tRNA_synth_type1"/>
    <property type="match status" value="1"/>
</dbReference>
<dbReference type="InterPro" id="IPR045462">
    <property type="entry name" value="aa-tRNA-synth_I_cd-bd"/>
</dbReference>
<dbReference type="InterPro" id="IPR020751">
    <property type="entry name" value="aa-tRNA-synth_I_codon-bd_sub2"/>
</dbReference>
<dbReference type="InterPro" id="IPR001412">
    <property type="entry name" value="aa-tRNA-synth_I_CS"/>
</dbReference>
<dbReference type="InterPro" id="IPR008925">
    <property type="entry name" value="aa_tRNA-synth_I_cd-bd_sf"/>
</dbReference>
<dbReference type="InterPro" id="IPR004527">
    <property type="entry name" value="Glu-tRNA-ligase_bac/mito"/>
</dbReference>
<dbReference type="InterPro" id="IPR000924">
    <property type="entry name" value="Glu/Gln-tRNA-synth"/>
</dbReference>
<dbReference type="InterPro" id="IPR020058">
    <property type="entry name" value="Glu/Gln-tRNA-synth_Ib_cat-dom"/>
</dbReference>
<dbReference type="InterPro" id="IPR049940">
    <property type="entry name" value="GluQ/Sye"/>
</dbReference>
<dbReference type="InterPro" id="IPR033910">
    <property type="entry name" value="GluRS_core"/>
</dbReference>
<dbReference type="InterPro" id="IPR014729">
    <property type="entry name" value="Rossmann-like_a/b/a_fold"/>
</dbReference>
<dbReference type="NCBIfam" id="TIGR00464">
    <property type="entry name" value="gltX_bact"/>
    <property type="match status" value="1"/>
</dbReference>
<dbReference type="PANTHER" id="PTHR43311">
    <property type="entry name" value="GLUTAMATE--TRNA LIGASE"/>
    <property type="match status" value="1"/>
</dbReference>
<dbReference type="PANTHER" id="PTHR43311:SF2">
    <property type="entry name" value="GLUTAMATE--TRNA LIGASE, MITOCHONDRIAL-RELATED"/>
    <property type="match status" value="1"/>
</dbReference>
<dbReference type="Pfam" id="PF19269">
    <property type="entry name" value="Anticodon_2"/>
    <property type="match status" value="1"/>
</dbReference>
<dbReference type="Pfam" id="PF00749">
    <property type="entry name" value="tRNA-synt_1c"/>
    <property type="match status" value="1"/>
</dbReference>
<dbReference type="PRINTS" id="PR00987">
    <property type="entry name" value="TRNASYNTHGLU"/>
</dbReference>
<dbReference type="SUPFAM" id="SSF48163">
    <property type="entry name" value="An anticodon-binding domain of class I aminoacyl-tRNA synthetases"/>
    <property type="match status" value="1"/>
</dbReference>
<dbReference type="SUPFAM" id="SSF52374">
    <property type="entry name" value="Nucleotidylyl transferase"/>
    <property type="match status" value="1"/>
</dbReference>
<dbReference type="PROSITE" id="PS00178">
    <property type="entry name" value="AA_TRNA_LIGASE_I"/>
    <property type="match status" value="1"/>
</dbReference>
<evidence type="ECO:0000255" key="1">
    <source>
        <dbReference type="HAMAP-Rule" id="MF_00022"/>
    </source>
</evidence>
<evidence type="ECO:0000305" key="2"/>
<feature type="chain" id="PRO_0000367656" description="Glutamate--tRNA ligase 2">
    <location>
        <begin position="1"/>
        <end position="469"/>
    </location>
</feature>
<feature type="short sequence motif" description="'HIGH' region" evidence="1">
    <location>
        <begin position="10"/>
        <end position="20"/>
    </location>
</feature>
<feature type="short sequence motif" description="'KMSKS' region" evidence="1">
    <location>
        <begin position="237"/>
        <end position="241"/>
    </location>
</feature>
<feature type="binding site" evidence="1">
    <location>
        <position position="99"/>
    </location>
    <ligand>
        <name>Zn(2+)</name>
        <dbReference type="ChEBI" id="CHEBI:29105"/>
    </ligand>
</feature>
<feature type="binding site" evidence="1">
    <location>
        <position position="101"/>
    </location>
    <ligand>
        <name>Zn(2+)</name>
        <dbReference type="ChEBI" id="CHEBI:29105"/>
    </ligand>
</feature>
<feature type="binding site" evidence="1">
    <location>
        <position position="126"/>
    </location>
    <ligand>
        <name>Zn(2+)</name>
        <dbReference type="ChEBI" id="CHEBI:29105"/>
    </ligand>
</feature>
<feature type="binding site" evidence="1">
    <location>
        <position position="128"/>
    </location>
    <ligand>
        <name>Zn(2+)</name>
        <dbReference type="ChEBI" id="CHEBI:29105"/>
    </ligand>
</feature>
<feature type="binding site" evidence="1">
    <location>
        <position position="240"/>
    </location>
    <ligand>
        <name>ATP</name>
        <dbReference type="ChEBI" id="CHEBI:30616"/>
    </ligand>
</feature>
<name>SYE2_COXB2</name>
<reference key="1">
    <citation type="journal article" date="2009" name="Infect. Immun.">
        <title>Comparative genomics reveal extensive transposon-mediated genomic plasticity and diversity among potential effector proteins within the genus Coxiella.</title>
        <authorList>
            <person name="Beare P.A."/>
            <person name="Unsworth N."/>
            <person name="Andoh M."/>
            <person name="Voth D.E."/>
            <person name="Omsland A."/>
            <person name="Gilk S.D."/>
            <person name="Williams K.P."/>
            <person name="Sobral B.W."/>
            <person name="Kupko J.J. III"/>
            <person name="Porcella S.F."/>
            <person name="Samuel J.E."/>
            <person name="Heinzen R.A."/>
        </authorList>
    </citation>
    <scope>NUCLEOTIDE SEQUENCE [LARGE SCALE GENOMIC DNA]</scope>
    <source>
        <strain>CbuG_Q212</strain>
    </source>
</reference>
<keyword id="KW-0030">Aminoacyl-tRNA synthetase</keyword>
<keyword id="KW-0067">ATP-binding</keyword>
<keyword id="KW-0963">Cytoplasm</keyword>
<keyword id="KW-0436">Ligase</keyword>
<keyword id="KW-0479">Metal-binding</keyword>
<keyword id="KW-0547">Nucleotide-binding</keyword>
<keyword id="KW-0648">Protein biosynthesis</keyword>
<keyword id="KW-0862">Zinc</keyword>
<comment type="function">
    <text evidence="1">Catalyzes the attachment of glutamate to tRNA(Glu) in a two-step reaction: glutamate is first activated by ATP to form Glu-AMP and then transferred to the acceptor end of tRNA(Glu).</text>
</comment>
<comment type="catalytic activity">
    <reaction evidence="1">
        <text>tRNA(Glu) + L-glutamate + ATP = L-glutamyl-tRNA(Glu) + AMP + diphosphate</text>
        <dbReference type="Rhea" id="RHEA:23540"/>
        <dbReference type="Rhea" id="RHEA-COMP:9663"/>
        <dbReference type="Rhea" id="RHEA-COMP:9680"/>
        <dbReference type="ChEBI" id="CHEBI:29985"/>
        <dbReference type="ChEBI" id="CHEBI:30616"/>
        <dbReference type="ChEBI" id="CHEBI:33019"/>
        <dbReference type="ChEBI" id="CHEBI:78442"/>
        <dbReference type="ChEBI" id="CHEBI:78520"/>
        <dbReference type="ChEBI" id="CHEBI:456215"/>
        <dbReference type="EC" id="6.1.1.17"/>
    </reaction>
</comment>
<comment type="cofactor">
    <cofactor evidence="1">
        <name>Zn(2+)</name>
        <dbReference type="ChEBI" id="CHEBI:29105"/>
    </cofactor>
    <text evidence="1">Binds 1 zinc ion per subunit.</text>
</comment>
<comment type="subunit">
    <text evidence="1">Monomer.</text>
</comment>
<comment type="subcellular location">
    <subcellularLocation>
        <location evidence="1">Cytoplasm</location>
    </subcellularLocation>
</comment>
<comment type="similarity">
    <text evidence="1">Belongs to the class-I aminoacyl-tRNA synthetase family. Glutamate--tRNA ligase type 1 subfamily.</text>
</comment>
<comment type="sequence caution" evidence="2">
    <conflict type="erroneous initiation">
        <sequence resource="EMBL-CDS" id="ACJ19070"/>
    </conflict>
</comment>
<sequence length="469" mass="53697">MKHIRTRFAPSPTGYLHIGGVRTALFSWLFARQNNGAFILRIEDTDVARSTQASVDAILEGLRWLQIDWNEGPYYQSQRMDRYREVIEQLVKSDDAYRCYCSKERLIELRNTQLKNKQKPRYDGFCRDKAPRQSNEPFVIRFRNPVEGAVVFDDLIRGTISIDNRELDDLIIARSDGGPTYNLTVVVDDWDMKITHVIRGDDHINNTPRQINILHALGAELPHYGHVPMILGPDGKRLSKRHGAVSVLQYRDEGYLPEALMNYLIRLGWAHGDQEIFSREEMVQLFDISAVSRSPAAFNPEKLLWLNQHYLKTVSPTIIAEAFATQLEKAGTDLRNGPSLEQVIALQAERTKTLKEMAQRSLYFYQEVRSYDEKAARKHLLATIVEPLQRVRERLASLPSWEKEAIHEVIVETAQLHQLKLGQLAQPIRVALTGDTVSPPIDATLYLIGRDSALKRLDHAIRFIHQGMG</sequence>
<proteinExistence type="inferred from homology"/>